<gene>
    <name evidence="1" type="primary">flpA</name>
    <name type="ordered locus">Pisl_0401</name>
</gene>
<organism>
    <name type="scientific">Pyrobaculum islandicum (strain DSM 4184 / JCM 9189 / GEO3)</name>
    <dbReference type="NCBI Taxonomy" id="384616"/>
    <lineage>
        <taxon>Archaea</taxon>
        <taxon>Thermoproteota</taxon>
        <taxon>Thermoprotei</taxon>
        <taxon>Thermoproteales</taxon>
        <taxon>Thermoproteaceae</taxon>
        <taxon>Pyrobaculum</taxon>
    </lineage>
</organism>
<feature type="chain" id="PRO_1000006944" description="Fibrillarin-like rRNA/tRNA 2'-O-methyltransferase">
    <location>
        <begin position="1"/>
        <end position="235"/>
    </location>
</feature>
<feature type="binding site" evidence="1">
    <location>
        <begin position="91"/>
        <end position="92"/>
    </location>
    <ligand>
        <name>S-adenosyl-L-methionine</name>
        <dbReference type="ChEBI" id="CHEBI:59789"/>
    </ligand>
</feature>
<feature type="binding site" evidence="1">
    <location>
        <begin position="110"/>
        <end position="111"/>
    </location>
    <ligand>
        <name>S-adenosyl-L-methionine</name>
        <dbReference type="ChEBI" id="CHEBI:59789"/>
    </ligand>
</feature>
<feature type="binding site" evidence="1">
    <location>
        <begin position="137"/>
        <end position="138"/>
    </location>
    <ligand>
        <name>S-adenosyl-L-methionine</name>
        <dbReference type="ChEBI" id="CHEBI:59789"/>
    </ligand>
</feature>
<feature type="binding site" evidence="1">
    <location>
        <begin position="157"/>
        <end position="160"/>
    </location>
    <ligand>
        <name>S-adenosyl-L-methionine</name>
        <dbReference type="ChEBI" id="CHEBI:59789"/>
    </ligand>
</feature>
<accession>A1RRJ7</accession>
<name>FLPA_PYRIL</name>
<dbReference type="EC" id="2.1.1.-" evidence="1"/>
<dbReference type="EMBL" id="CP000504">
    <property type="protein sequence ID" value="ABL87579.1"/>
    <property type="molecule type" value="Genomic_DNA"/>
</dbReference>
<dbReference type="RefSeq" id="WP_011762156.1">
    <property type="nucleotide sequence ID" value="NC_008701.1"/>
</dbReference>
<dbReference type="SMR" id="A1RRJ7"/>
<dbReference type="STRING" id="384616.Pisl_0401"/>
<dbReference type="GeneID" id="4617104"/>
<dbReference type="KEGG" id="pis:Pisl_0401"/>
<dbReference type="eggNOG" id="arCOG00078">
    <property type="taxonomic scope" value="Archaea"/>
</dbReference>
<dbReference type="HOGENOM" id="CLU_059055_2_0_2"/>
<dbReference type="OrthoDB" id="6244at2157"/>
<dbReference type="Proteomes" id="UP000002595">
    <property type="component" value="Chromosome"/>
</dbReference>
<dbReference type="GO" id="GO:1990259">
    <property type="term" value="F:histone H2AQ104 methyltransferase activity"/>
    <property type="evidence" value="ECO:0007669"/>
    <property type="project" value="TreeGrafter"/>
</dbReference>
<dbReference type="GO" id="GO:0003723">
    <property type="term" value="F:RNA binding"/>
    <property type="evidence" value="ECO:0007669"/>
    <property type="project" value="UniProtKB-UniRule"/>
</dbReference>
<dbReference type="GO" id="GO:0008649">
    <property type="term" value="F:rRNA methyltransferase activity"/>
    <property type="evidence" value="ECO:0007669"/>
    <property type="project" value="TreeGrafter"/>
</dbReference>
<dbReference type="GO" id="GO:0000494">
    <property type="term" value="P:box C/D sno(s)RNA 3'-end processing"/>
    <property type="evidence" value="ECO:0007669"/>
    <property type="project" value="TreeGrafter"/>
</dbReference>
<dbReference type="GO" id="GO:0008033">
    <property type="term" value="P:tRNA processing"/>
    <property type="evidence" value="ECO:0007669"/>
    <property type="project" value="UniProtKB-UniRule"/>
</dbReference>
<dbReference type="CDD" id="cd02440">
    <property type="entry name" value="AdoMet_MTases"/>
    <property type="match status" value="1"/>
</dbReference>
<dbReference type="FunFam" id="3.30.200.20:FF:000613">
    <property type="entry name" value="Fibrillarin-like rRNA/tRNA 2'-O-methyltransferase"/>
    <property type="match status" value="1"/>
</dbReference>
<dbReference type="FunFam" id="3.40.50.150:FF:000643">
    <property type="entry name" value="Fibrillarin-like rRNA/tRNA 2'-O-methyltransferase"/>
    <property type="match status" value="1"/>
</dbReference>
<dbReference type="Gene3D" id="3.30.200.20">
    <property type="entry name" value="Phosphorylase Kinase, domain 1"/>
    <property type="match status" value="1"/>
</dbReference>
<dbReference type="Gene3D" id="3.40.50.150">
    <property type="entry name" value="Vaccinia Virus protein VP39"/>
    <property type="match status" value="1"/>
</dbReference>
<dbReference type="HAMAP" id="MF_00351">
    <property type="entry name" value="RNA_methyltransf_FlpA"/>
    <property type="match status" value="1"/>
</dbReference>
<dbReference type="InterPro" id="IPR000692">
    <property type="entry name" value="Fibrillarin"/>
</dbReference>
<dbReference type="InterPro" id="IPR020813">
    <property type="entry name" value="Fibrillarin_CS"/>
</dbReference>
<dbReference type="InterPro" id="IPR029063">
    <property type="entry name" value="SAM-dependent_MTases_sf"/>
</dbReference>
<dbReference type="NCBIfam" id="NF003275">
    <property type="entry name" value="PRK04266.1-1"/>
    <property type="match status" value="1"/>
</dbReference>
<dbReference type="NCBIfam" id="NF003276">
    <property type="entry name" value="PRK04266.1-2"/>
    <property type="match status" value="1"/>
</dbReference>
<dbReference type="NCBIfam" id="NF003277">
    <property type="entry name" value="PRK04266.1-3"/>
    <property type="match status" value="1"/>
</dbReference>
<dbReference type="PANTHER" id="PTHR10335:SF17">
    <property type="entry name" value="FIBRILLARIN"/>
    <property type="match status" value="1"/>
</dbReference>
<dbReference type="PANTHER" id="PTHR10335">
    <property type="entry name" value="RRNA 2-O-METHYLTRANSFERASE FIBRILLARIN"/>
    <property type="match status" value="1"/>
</dbReference>
<dbReference type="Pfam" id="PF01269">
    <property type="entry name" value="Fibrillarin"/>
    <property type="match status" value="1"/>
</dbReference>
<dbReference type="PIRSF" id="PIRSF006540">
    <property type="entry name" value="Nop17p"/>
    <property type="match status" value="1"/>
</dbReference>
<dbReference type="PRINTS" id="PR00052">
    <property type="entry name" value="FIBRILLARIN"/>
</dbReference>
<dbReference type="SMART" id="SM01206">
    <property type="entry name" value="Fibrillarin"/>
    <property type="match status" value="1"/>
</dbReference>
<dbReference type="SUPFAM" id="SSF53335">
    <property type="entry name" value="S-adenosyl-L-methionine-dependent methyltransferases"/>
    <property type="match status" value="1"/>
</dbReference>
<dbReference type="PROSITE" id="PS00566">
    <property type="entry name" value="FIBRILLARIN"/>
    <property type="match status" value="1"/>
</dbReference>
<proteinExistence type="inferred from homology"/>
<comment type="function">
    <text evidence="1">Involved in pre-rRNA and tRNA processing. Utilizes the methyl donor S-adenosyl-L-methionine to catalyze the site-specific 2'-hydroxyl methylation of ribose moieties in rRNA and tRNA. Site specificity is provided by a guide RNA that base pairs with the substrate. Methylation occurs at a characteristic distance from the sequence involved in base pairing with the guide RNA.</text>
</comment>
<comment type="subunit">
    <text evidence="1">Interacts with nop5. Component of box C/D small ribonucleoprotein (sRNP) particles that contain rpl7ae, FlpA and nop5, plus a guide RNA.</text>
</comment>
<comment type="similarity">
    <text evidence="1">Belongs to the methyltransferase superfamily. Fibrillarin family.</text>
</comment>
<keyword id="KW-0489">Methyltransferase</keyword>
<keyword id="KW-0694">RNA-binding</keyword>
<keyword id="KW-0698">rRNA processing</keyword>
<keyword id="KW-0808">Transferase</keyword>
<keyword id="KW-0819">tRNA processing</keyword>
<reference key="1">
    <citation type="submission" date="2006-12" db="EMBL/GenBank/DDBJ databases">
        <title>Complete sequence of Pyrobaculum islandicum DSM 4184.</title>
        <authorList>
            <person name="Copeland A."/>
            <person name="Lucas S."/>
            <person name="Lapidus A."/>
            <person name="Barry K."/>
            <person name="Detter J.C."/>
            <person name="Glavina del Rio T."/>
            <person name="Dalin E."/>
            <person name="Tice H."/>
            <person name="Pitluck S."/>
            <person name="Meincke L."/>
            <person name="Brettin T."/>
            <person name="Bruce D."/>
            <person name="Han C."/>
            <person name="Tapia R."/>
            <person name="Gilna P."/>
            <person name="Schmutz J."/>
            <person name="Larimer F."/>
            <person name="Land M."/>
            <person name="Hauser L."/>
            <person name="Kyrpides N."/>
            <person name="Mikhailova N."/>
            <person name="Cozen A.E."/>
            <person name="Fitz-Gibbon S.T."/>
            <person name="House C.H."/>
            <person name="Saltikov C."/>
            <person name="Lowe T."/>
            <person name="Richardson P."/>
        </authorList>
    </citation>
    <scope>NUCLEOTIDE SEQUENCE [LARGE SCALE GENOMIC DNA]</scope>
    <source>
        <strain>DSM 4184 / JCM 9189 / GEO3</strain>
    </source>
</reference>
<protein>
    <recommendedName>
        <fullName evidence="1">Fibrillarin-like rRNA/tRNA 2'-O-methyltransferase</fullName>
        <ecNumber evidence="1">2.1.1.-</ecNumber>
    </recommendedName>
</protein>
<evidence type="ECO:0000255" key="1">
    <source>
        <dbReference type="HAMAP-Rule" id="MF_00351"/>
    </source>
</evidence>
<sequence length="235" mass="26745">MSIEVVDVRKHEHHFGVYVVKFEDGTERLATKNLTPGKRVYGERLIKWRDEEYREWNPYRSKLAAAIVNGIKFIPIQEGTHMLYLGAASGTTPSHISDIVGERGLIYSVEFSPRVFREFIEKLVDQGRRNVVPILGDARFPYQYAHYVKGVDVVYIDVAQPAQAKILADNADYFLKPGGYVMLVIKAMSIDVTAPATETFKQEINTLKERGFEILETVHLEPYDTAHAMVIAKKK</sequence>